<sequence>MPVVISEKQFNDAHQAFKLHDKKDEGAVSNKELTNLFKSLALHVSDDKLQQWVDEMDEDATGVIRWEKFKILFERKVQEDEDERELRSAFRVLDKNNQGVIDVEDLRWILKSLGDDLNDDEIQDMINETDTDGSGTVDYEEFSALMLG</sequence>
<protein>
    <recommendedName>
        <fullName>Troponin C</fullName>
        <shortName>TN-C</shortName>
    </recommendedName>
</protein>
<name>TNNC_TODPA</name>
<evidence type="ECO:0000255" key="1">
    <source>
        <dbReference type="PROSITE-ProRule" id="PRU00448"/>
    </source>
</evidence>
<evidence type="ECO:0000269" key="2">
    <source>
    </source>
</evidence>
<evidence type="ECO:0000305" key="3"/>
<evidence type="ECO:0000312" key="4">
    <source>
        <dbReference type="EMBL" id="BAB40597.1"/>
    </source>
</evidence>
<dbReference type="EMBL" id="AB049962">
    <property type="protein sequence ID" value="BAB40597.1"/>
    <property type="molecule type" value="mRNA"/>
</dbReference>
<dbReference type="SMR" id="Q9BLG0"/>
<dbReference type="GO" id="GO:0016460">
    <property type="term" value="C:myosin II complex"/>
    <property type="evidence" value="ECO:0007669"/>
    <property type="project" value="TreeGrafter"/>
</dbReference>
<dbReference type="GO" id="GO:0005509">
    <property type="term" value="F:calcium ion binding"/>
    <property type="evidence" value="ECO:0000304"/>
    <property type="project" value="UniProtKB"/>
</dbReference>
<dbReference type="CDD" id="cd00051">
    <property type="entry name" value="EFh"/>
    <property type="match status" value="1"/>
</dbReference>
<dbReference type="FunFam" id="1.10.238.10:FF:000001">
    <property type="entry name" value="Calmodulin 1"/>
    <property type="match status" value="1"/>
</dbReference>
<dbReference type="Gene3D" id="1.10.238.10">
    <property type="entry name" value="EF-hand"/>
    <property type="match status" value="3"/>
</dbReference>
<dbReference type="InterPro" id="IPR050230">
    <property type="entry name" value="CALM/Myosin/TropC-like"/>
</dbReference>
<dbReference type="InterPro" id="IPR011992">
    <property type="entry name" value="EF-hand-dom_pair"/>
</dbReference>
<dbReference type="InterPro" id="IPR018247">
    <property type="entry name" value="EF_Hand_1_Ca_BS"/>
</dbReference>
<dbReference type="InterPro" id="IPR002048">
    <property type="entry name" value="EF_hand_dom"/>
</dbReference>
<dbReference type="PANTHER" id="PTHR23048:SF0">
    <property type="entry name" value="CALMODULIN LIKE 3"/>
    <property type="match status" value="1"/>
</dbReference>
<dbReference type="PANTHER" id="PTHR23048">
    <property type="entry name" value="MYOSIN LIGHT CHAIN 1, 3"/>
    <property type="match status" value="1"/>
</dbReference>
<dbReference type="Pfam" id="PF13499">
    <property type="entry name" value="EF-hand_7"/>
    <property type="match status" value="2"/>
</dbReference>
<dbReference type="SMART" id="SM00054">
    <property type="entry name" value="EFh"/>
    <property type="match status" value="3"/>
</dbReference>
<dbReference type="SUPFAM" id="SSF47473">
    <property type="entry name" value="EF-hand"/>
    <property type="match status" value="1"/>
</dbReference>
<dbReference type="PROSITE" id="PS00018">
    <property type="entry name" value="EF_HAND_1"/>
    <property type="match status" value="1"/>
</dbReference>
<dbReference type="PROSITE" id="PS50222">
    <property type="entry name" value="EF_HAND_2"/>
    <property type="match status" value="4"/>
</dbReference>
<organism evidence="4">
    <name type="scientific">Todarodes pacificus</name>
    <name type="common">Japanese flying squid</name>
    <name type="synonym">Ommastrephes pacificus</name>
    <dbReference type="NCBI Taxonomy" id="6637"/>
    <lineage>
        <taxon>Eukaryota</taxon>
        <taxon>Metazoa</taxon>
        <taxon>Spiralia</taxon>
        <taxon>Lophotrochozoa</taxon>
        <taxon>Mollusca</taxon>
        <taxon>Cephalopoda</taxon>
        <taxon>Coleoidea</taxon>
        <taxon>Decapodiformes</taxon>
        <taxon>Oegopsida</taxon>
        <taxon>Ommastrephidae</taxon>
        <taxon>Todarodes</taxon>
    </lineage>
</organism>
<reference evidence="3" key="1">
    <citation type="journal article" date="2001" name="Comp. Biochem. Physiol.">
        <title>Amino acid sequence of squid troponin C.</title>
        <authorList>
            <person name="Ojima T."/>
            <person name="Ohta T."/>
            <person name="Nishita K."/>
        </authorList>
    </citation>
    <scope>NUCLEOTIDE SEQUENCE [MRNA]</scope>
    <scope>PROTEIN SEQUENCE OF 2-138</scope>
    <source>
        <tissue>Mantle muscle</tissue>
    </source>
</reference>
<proteinExistence type="evidence at protein level"/>
<comment type="function">
    <text>Troponin is the central regulatory protein of striated muscle contraction. Tn consists of three components: Tn-I which is the inhibitor of actomyosin ATPase, Tn-T which contains the binding site for tropomyosin and Tn-C. The binding of calcium to Tn-C abolishes the inhibitory action of Tn on actin filaments.</text>
</comment>
<comment type="miscellaneous">
    <text evidence="2">This protein binds one calcium ion.</text>
</comment>
<comment type="similarity">
    <text evidence="3">Belongs to the troponin C family.</text>
</comment>
<accession>Q9BLG0</accession>
<feature type="initiator methionine" description="Removed" evidence="2">
    <location>
        <position position="1"/>
    </location>
</feature>
<feature type="chain" id="PRO_0000073695" description="Troponin C">
    <location>
        <begin position="2"/>
        <end position="148"/>
    </location>
</feature>
<feature type="domain" description="EF-hand 1" evidence="1">
    <location>
        <begin position="8"/>
        <end position="43"/>
    </location>
</feature>
<feature type="domain" description="EF-hand 2" evidence="1">
    <location>
        <begin position="44"/>
        <end position="79"/>
    </location>
</feature>
<feature type="domain" description="EF-hand 3" evidence="1">
    <location>
        <begin position="81"/>
        <end position="116"/>
    </location>
</feature>
<feature type="domain" description="EF-hand 4" evidence="1">
    <location>
        <begin position="117"/>
        <end position="148"/>
    </location>
</feature>
<feature type="binding site" evidence="1">
    <location>
        <position position="130"/>
    </location>
    <ligand>
        <name>Ca(2+)</name>
        <dbReference type="ChEBI" id="CHEBI:29108"/>
    </ligand>
</feature>
<feature type="binding site" evidence="1">
    <location>
        <position position="132"/>
    </location>
    <ligand>
        <name>Ca(2+)</name>
        <dbReference type="ChEBI" id="CHEBI:29108"/>
    </ligand>
</feature>
<feature type="binding site" evidence="1">
    <location>
        <position position="134"/>
    </location>
    <ligand>
        <name>Ca(2+)</name>
        <dbReference type="ChEBI" id="CHEBI:29108"/>
    </ligand>
</feature>
<feature type="binding site" evidence="1">
    <location>
        <position position="136"/>
    </location>
    <ligand>
        <name>Ca(2+)</name>
        <dbReference type="ChEBI" id="CHEBI:29108"/>
    </ligand>
</feature>
<feature type="binding site" evidence="1">
    <location>
        <position position="141"/>
    </location>
    <ligand>
        <name>Ca(2+)</name>
        <dbReference type="ChEBI" id="CHEBI:29108"/>
    </ligand>
</feature>
<keyword id="KW-0106">Calcium</keyword>
<keyword id="KW-0903">Direct protein sequencing</keyword>
<keyword id="KW-0479">Metal-binding</keyword>
<keyword id="KW-0514">Muscle protein</keyword>
<keyword id="KW-0677">Repeat</keyword>